<name>YCF3_PROM0</name>
<gene>
    <name evidence="1" type="primary">ycf3</name>
    <name type="ordered locus">P9301_01511</name>
</gene>
<protein>
    <recommendedName>
        <fullName evidence="1">Photosystem I assembly protein Ycf3</fullName>
    </recommendedName>
</protein>
<comment type="function">
    <text evidence="1">Essential for the assembly of the photosystem I (PSI) complex. May act as a chaperone-like factor to guide the assembly of the PSI subunits.</text>
</comment>
<comment type="subcellular location">
    <subcellularLocation>
        <location evidence="1">Cellular thylakoid membrane</location>
        <topology evidence="1">Peripheral membrane protein</topology>
    </subcellularLocation>
</comment>
<comment type="similarity">
    <text evidence="1">Belongs to the Ycf3 family.</text>
</comment>
<proteinExistence type="inferred from homology"/>
<dbReference type="EMBL" id="CP000576">
    <property type="protein sequence ID" value="ABO16774.1"/>
    <property type="molecule type" value="Genomic_DNA"/>
</dbReference>
<dbReference type="RefSeq" id="WP_011862177.1">
    <property type="nucleotide sequence ID" value="NC_009091.1"/>
</dbReference>
<dbReference type="SMR" id="A3PAJ9"/>
<dbReference type="STRING" id="167546.P9301_01511"/>
<dbReference type="KEGG" id="pmg:P9301_01511"/>
<dbReference type="eggNOG" id="COG3063">
    <property type="taxonomic scope" value="Bacteria"/>
</dbReference>
<dbReference type="HOGENOM" id="CLU_141248_0_0_3"/>
<dbReference type="OrthoDB" id="9429505at2"/>
<dbReference type="Proteomes" id="UP000001430">
    <property type="component" value="Chromosome"/>
</dbReference>
<dbReference type="GO" id="GO:0031676">
    <property type="term" value="C:plasma membrane-derived thylakoid membrane"/>
    <property type="evidence" value="ECO:0007669"/>
    <property type="project" value="UniProtKB-SubCell"/>
</dbReference>
<dbReference type="GO" id="GO:0015979">
    <property type="term" value="P:photosynthesis"/>
    <property type="evidence" value="ECO:0007669"/>
    <property type="project" value="UniProtKB-UniRule"/>
</dbReference>
<dbReference type="Gene3D" id="1.25.40.10">
    <property type="entry name" value="Tetratricopeptide repeat domain"/>
    <property type="match status" value="1"/>
</dbReference>
<dbReference type="HAMAP" id="MF_00439">
    <property type="entry name" value="Ycf3"/>
    <property type="match status" value="1"/>
</dbReference>
<dbReference type="InterPro" id="IPR022818">
    <property type="entry name" value="PSI_Ycf3_assembly"/>
</dbReference>
<dbReference type="InterPro" id="IPR011990">
    <property type="entry name" value="TPR-like_helical_dom_sf"/>
</dbReference>
<dbReference type="InterPro" id="IPR019734">
    <property type="entry name" value="TPR_rpt"/>
</dbReference>
<dbReference type="InterPro" id="IPR051685">
    <property type="entry name" value="Ycf3/AcsC/BcsC/TPR_MFPF"/>
</dbReference>
<dbReference type="NCBIfam" id="NF002725">
    <property type="entry name" value="PRK02603.1"/>
    <property type="match status" value="1"/>
</dbReference>
<dbReference type="PANTHER" id="PTHR44943">
    <property type="entry name" value="CELLULOSE SYNTHASE OPERON PROTEIN C"/>
    <property type="match status" value="1"/>
</dbReference>
<dbReference type="PANTHER" id="PTHR44943:SF8">
    <property type="entry name" value="TPR REPEAT-CONTAINING PROTEIN MJ0263"/>
    <property type="match status" value="1"/>
</dbReference>
<dbReference type="Pfam" id="PF13176">
    <property type="entry name" value="TPR_7"/>
    <property type="match status" value="1"/>
</dbReference>
<dbReference type="Pfam" id="PF13181">
    <property type="entry name" value="TPR_8"/>
    <property type="match status" value="1"/>
</dbReference>
<dbReference type="SMART" id="SM00028">
    <property type="entry name" value="TPR"/>
    <property type="match status" value="3"/>
</dbReference>
<dbReference type="SUPFAM" id="SSF48452">
    <property type="entry name" value="TPR-like"/>
    <property type="match status" value="1"/>
</dbReference>
<dbReference type="PROSITE" id="PS50005">
    <property type="entry name" value="TPR"/>
    <property type="match status" value="2"/>
</dbReference>
<dbReference type="PROSITE" id="PS50293">
    <property type="entry name" value="TPR_REGION"/>
    <property type="match status" value="1"/>
</dbReference>
<reference key="1">
    <citation type="journal article" date="2007" name="PLoS Genet.">
        <title>Patterns and implications of gene gain and loss in the evolution of Prochlorococcus.</title>
        <authorList>
            <person name="Kettler G.C."/>
            <person name="Martiny A.C."/>
            <person name="Huang K."/>
            <person name="Zucker J."/>
            <person name="Coleman M.L."/>
            <person name="Rodrigue S."/>
            <person name="Chen F."/>
            <person name="Lapidus A."/>
            <person name="Ferriera S."/>
            <person name="Johnson J."/>
            <person name="Steglich C."/>
            <person name="Church G.M."/>
            <person name="Richardson P."/>
            <person name="Chisholm S.W."/>
        </authorList>
    </citation>
    <scope>NUCLEOTIDE SEQUENCE [LARGE SCALE GENOMIC DNA]</scope>
    <source>
        <strain>MIT 9301</strain>
    </source>
</reference>
<organism>
    <name type="scientific">Prochlorococcus marinus (strain MIT 9301)</name>
    <dbReference type="NCBI Taxonomy" id="167546"/>
    <lineage>
        <taxon>Bacteria</taxon>
        <taxon>Bacillati</taxon>
        <taxon>Cyanobacteriota</taxon>
        <taxon>Cyanophyceae</taxon>
        <taxon>Synechococcales</taxon>
        <taxon>Prochlorococcaceae</taxon>
        <taxon>Prochlorococcus</taxon>
    </lineage>
</organism>
<evidence type="ECO:0000255" key="1">
    <source>
        <dbReference type="HAMAP-Rule" id="MF_00439"/>
    </source>
</evidence>
<accession>A3PAJ9</accession>
<sequence>MPSNQNRDNFIDKAFTVIAESIVKIMPIAEKEKKAYIYYRDGLAAQNNGDYSEALEYYKESLLLEENKIDRGETLKNMAIIYMSNGEEDLSIETYEKALVENPKQPSCLKNIGLIYEKRGRNAEQNGDLDQRDIWFDKAAEVWSKAVRLYPGGYLDIENWLKNSGRSSIDMYL</sequence>
<feature type="chain" id="PRO_0000325043" description="Photosystem I assembly protein Ycf3">
    <location>
        <begin position="1"/>
        <end position="173"/>
    </location>
</feature>
<feature type="repeat" description="TPR 1">
    <location>
        <begin position="35"/>
        <end position="68"/>
    </location>
</feature>
<feature type="repeat" description="TPR 2">
    <location>
        <begin position="72"/>
        <end position="105"/>
    </location>
</feature>
<feature type="repeat" description="TPR 3">
    <location>
        <begin position="120"/>
        <end position="153"/>
    </location>
</feature>
<keyword id="KW-0472">Membrane</keyword>
<keyword id="KW-0602">Photosynthesis</keyword>
<keyword id="KW-1185">Reference proteome</keyword>
<keyword id="KW-0677">Repeat</keyword>
<keyword id="KW-0793">Thylakoid</keyword>
<keyword id="KW-0802">TPR repeat</keyword>